<sequence>MKNGFYATYRSKNKGKDKRSINLSVFLNSLLADNHHLQVGSNYLYIHKIDGKTFLFTKTNDKSLVQKINRSKASVEDIKNSLADDESLGFPSFLFVEGDTIGFARTVFGPTTSDLTDFLIGKGMSLSSGERVQIEPLMRGTTKDDVMHMHFIGRTTVKVEAKLPVFGDILKVLGATDIEGELFDSLDIVIKPKFKRDIKKVAKDIIFNPSPQFSDISLRAKDEAGDILTEHYLSEKGHLSAPLNKVTNAEIAEEMAYCYARMKSDILECFKRQVGKVKD</sequence>
<dbReference type="EMBL" id="J02459">
    <property type="protein sequence ID" value="AAA96580.1"/>
    <property type="molecule type" value="Genomic_DNA"/>
</dbReference>
<dbReference type="PIR" id="E43010">
    <property type="entry name" value="IMBPAL"/>
</dbReference>
<dbReference type="RefSeq" id="NP_040627.1">
    <property type="nucleotide sequence ID" value="NC_001416.1"/>
</dbReference>
<dbReference type="PDB" id="8TWQ">
    <property type="method" value="X-ray"/>
    <property type="resolution" value="2.05 A"/>
    <property type="chains" value="A/B=1-279"/>
</dbReference>
<dbReference type="PDBsum" id="8TWQ"/>
<dbReference type="SMR" id="P68924"/>
<dbReference type="KEGG" id="vg:3827058"/>
<dbReference type="Proteomes" id="UP000001711">
    <property type="component" value="Genome"/>
</dbReference>
<dbReference type="InterPro" id="IPR031894">
    <property type="entry name" value="RexA"/>
</dbReference>
<dbReference type="Pfam" id="PF15969">
    <property type="entry name" value="RexA"/>
    <property type="match status" value="1"/>
</dbReference>
<comment type="function">
    <text evidence="1 2">May confer an overall protective ability to the host cell by triggering a growth arrest and avoiding lethal host gene expression. Additionally, may confer symbiotic protection to the lysogenic host against secondary infection.</text>
</comment>
<organism>
    <name type="scientific">Escherichia phage lambda</name>
    <name type="common">Bacteriophage lambda</name>
    <dbReference type="NCBI Taxonomy" id="2681611"/>
    <lineage>
        <taxon>Viruses</taxon>
        <taxon>Duplodnaviria</taxon>
        <taxon>Heunggongvirae</taxon>
        <taxon>Uroviricota</taxon>
        <taxon>Caudoviricetes</taxon>
        <taxon>Lambdavirus</taxon>
        <taxon>Lambdavirus lambda</taxon>
    </lineage>
</organism>
<organismHost>
    <name type="scientific">Escherichia coli</name>
    <dbReference type="NCBI Taxonomy" id="562"/>
</organismHost>
<accession>P68924</accession>
<accession>P03760</accession>
<evidence type="ECO:0000269" key="1">
    <source>
    </source>
</evidence>
<evidence type="ECO:0000269" key="2">
    <source>
    </source>
</evidence>
<evidence type="ECO:0007829" key="3">
    <source>
        <dbReference type="PDB" id="8TWQ"/>
    </source>
</evidence>
<gene>
    <name type="primary">rexA</name>
    <name type="synonym">rex</name>
    <name type="ordered locus">lambdap87</name>
</gene>
<protein>
    <recommendedName>
        <fullName>Protein rexA</fullName>
    </recommendedName>
</protein>
<keyword id="KW-0002">3D-structure</keyword>
<keyword id="KW-1185">Reference proteome</keyword>
<reference key="1">
    <citation type="journal article" date="1982" name="J. Mol. Biol.">
        <title>Nucleotide sequence of bacteriophage lambda DNA.</title>
        <authorList>
            <person name="Sanger F."/>
            <person name="Coulson A.R."/>
            <person name="Hong G.F."/>
            <person name="Hill D.F."/>
            <person name="Petersen G.B."/>
        </authorList>
    </citation>
    <scope>NUCLEOTIDE SEQUENCE [LARGE SCALE GENOMIC DNA]</scope>
</reference>
<reference key="2">
    <citation type="journal article" date="1989" name="Gene">
        <title>The rex genes of bacteriophage lambda can inhibit cell function without phage superinfection.</title>
        <authorList>
            <person name="Snyder L."/>
            <person name="McWilliams K."/>
        </authorList>
    </citation>
    <scope>FUNCTION</scope>
</reference>
<reference key="3">
    <citation type="journal article" date="2002" name="J. Bacteriol.">
        <title>Rex-centric mutualism.</title>
        <authorList>
            <person name="Slavcev R.A."/>
            <person name="Hayes S."/>
        </authorList>
    </citation>
    <scope>FUNCTION</scope>
</reference>
<proteinExistence type="evidence at protein level"/>
<name>REXA_LAMBD</name>
<feature type="chain" id="PRO_0000077706" description="Protein rexA">
    <location>
        <begin position="1"/>
        <end position="279"/>
    </location>
</feature>
<feature type="strand" evidence="3">
    <location>
        <begin position="2"/>
        <end position="12"/>
    </location>
</feature>
<feature type="turn" evidence="3">
    <location>
        <begin position="13"/>
        <end position="16"/>
    </location>
</feature>
<feature type="strand" evidence="3">
    <location>
        <begin position="17"/>
        <end position="19"/>
    </location>
</feature>
<feature type="helix" evidence="3">
    <location>
        <begin position="23"/>
        <end position="28"/>
    </location>
</feature>
<feature type="strand" evidence="3">
    <location>
        <begin position="36"/>
        <end position="39"/>
    </location>
</feature>
<feature type="strand" evidence="3">
    <location>
        <begin position="42"/>
        <end position="50"/>
    </location>
</feature>
<feature type="strand" evidence="3">
    <location>
        <begin position="53"/>
        <end position="59"/>
    </location>
</feature>
<feature type="helix" evidence="3">
    <location>
        <begin position="62"/>
        <end position="71"/>
    </location>
</feature>
<feature type="helix" evidence="3">
    <location>
        <begin position="75"/>
        <end position="79"/>
    </location>
</feature>
<feature type="helix" evidence="3">
    <location>
        <begin position="83"/>
        <end position="85"/>
    </location>
</feature>
<feature type="strand" evidence="3">
    <location>
        <begin position="87"/>
        <end position="97"/>
    </location>
</feature>
<feature type="strand" evidence="3">
    <location>
        <begin position="100"/>
        <end position="105"/>
    </location>
</feature>
<feature type="helix" evidence="3">
    <location>
        <begin position="112"/>
        <end position="121"/>
    </location>
</feature>
<feature type="strand" evidence="3">
    <location>
        <begin position="131"/>
        <end position="140"/>
    </location>
</feature>
<feature type="helix" evidence="3">
    <location>
        <begin position="143"/>
        <end position="147"/>
    </location>
</feature>
<feature type="strand" evidence="3">
    <location>
        <begin position="151"/>
        <end position="160"/>
    </location>
</feature>
<feature type="helix" evidence="3">
    <location>
        <begin position="164"/>
        <end position="172"/>
    </location>
</feature>
<feature type="helix" evidence="3">
    <location>
        <begin position="180"/>
        <end position="182"/>
    </location>
</feature>
<feature type="strand" evidence="3">
    <location>
        <begin position="183"/>
        <end position="193"/>
    </location>
</feature>
<feature type="helix" evidence="3">
    <location>
        <begin position="199"/>
        <end position="206"/>
    </location>
</feature>
<feature type="strand" evidence="3">
    <location>
        <begin position="214"/>
        <end position="223"/>
    </location>
</feature>
<feature type="strand" evidence="3">
    <location>
        <begin position="229"/>
        <end position="236"/>
    </location>
</feature>
<feature type="helix" evidence="3">
    <location>
        <begin position="248"/>
        <end position="273"/>
    </location>
</feature>